<sequence>MQKQELLYKGKAKSVYETEDNDLLILHFRDDTSALDGKRIEQLARKGVVNNRFNAFIMQKLADAGIETHFEKQLSDDEVLVKRLDMIPVECVVRNFAAGSLVRRLGLEEGQALTPPTYELFYKDDALGDPMVNESISISLGWANDAQLVKMKELSHQVNEVLTALFDAGDLILVDFKLEFGVFHDRIVLGDEFSPDGCRIWDKATKKKLDKDRFRQSLGDVIEAYEEVASRIGVPLS</sequence>
<feature type="chain" id="PRO_1000018763" description="Phosphoribosylaminoimidazole-succinocarboxamide synthase">
    <location>
        <begin position="1"/>
        <end position="237"/>
    </location>
</feature>
<keyword id="KW-0067">ATP-binding</keyword>
<keyword id="KW-0436">Ligase</keyword>
<keyword id="KW-0547">Nucleotide-binding</keyword>
<keyword id="KW-0658">Purine biosynthesis</keyword>
<reference key="1">
    <citation type="submission" date="2006-03" db="EMBL/GenBank/DDBJ databases">
        <title>Complete sequence of chromosome of Psychrobacter cryohalolentis K5.</title>
        <authorList>
            <consortium name="US DOE Joint Genome Institute"/>
            <person name="Copeland A."/>
            <person name="Lucas S."/>
            <person name="Lapidus A."/>
            <person name="Barry K."/>
            <person name="Detter J.C."/>
            <person name="Glavina T."/>
            <person name="Hammon N."/>
            <person name="Israni S."/>
            <person name="Dalin E."/>
            <person name="Tice H."/>
            <person name="Pitluck S."/>
            <person name="Brettin T."/>
            <person name="Bruce D."/>
            <person name="Han C."/>
            <person name="Tapia R."/>
            <person name="Sims D.R."/>
            <person name="Gilna P."/>
            <person name="Schmutz J."/>
            <person name="Larimer F."/>
            <person name="Land M."/>
            <person name="Hauser L."/>
            <person name="Kyrpides N."/>
            <person name="Kim E."/>
            <person name="Richardson P."/>
        </authorList>
    </citation>
    <scope>NUCLEOTIDE SEQUENCE [LARGE SCALE GENOMIC DNA]</scope>
    <source>
        <strain>ATCC BAA-1226 / DSM 17306 / VKM B-2378 / K5</strain>
    </source>
</reference>
<gene>
    <name evidence="1" type="primary">purC</name>
    <name type="ordered locus">Pcryo_0160</name>
</gene>
<dbReference type="EC" id="6.3.2.6" evidence="1"/>
<dbReference type="EMBL" id="CP000323">
    <property type="protein sequence ID" value="ABE73944.1"/>
    <property type="molecule type" value="Genomic_DNA"/>
</dbReference>
<dbReference type="RefSeq" id="WP_011512534.1">
    <property type="nucleotide sequence ID" value="NC_007969.1"/>
</dbReference>
<dbReference type="SMR" id="Q1QEF9"/>
<dbReference type="STRING" id="335284.Pcryo_0160"/>
<dbReference type="KEGG" id="pcr:Pcryo_0160"/>
<dbReference type="eggNOG" id="COG0152">
    <property type="taxonomic scope" value="Bacteria"/>
</dbReference>
<dbReference type="HOGENOM" id="CLU_061495_2_0_6"/>
<dbReference type="UniPathway" id="UPA00074">
    <property type="reaction ID" value="UER00131"/>
</dbReference>
<dbReference type="Proteomes" id="UP000002425">
    <property type="component" value="Chromosome"/>
</dbReference>
<dbReference type="GO" id="GO:0005829">
    <property type="term" value="C:cytosol"/>
    <property type="evidence" value="ECO:0007669"/>
    <property type="project" value="TreeGrafter"/>
</dbReference>
<dbReference type="GO" id="GO:0005524">
    <property type="term" value="F:ATP binding"/>
    <property type="evidence" value="ECO:0007669"/>
    <property type="project" value="UniProtKB-KW"/>
</dbReference>
<dbReference type="GO" id="GO:0004639">
    <property type="term" value="F:phosphoribosylaminoimidazolesuccinocarboxamide synthase activity"/>
    <property type="evidence" value="ECO:0007669"/>
    <property type="project" value="UniProtKB-UniRule"/>
</dbReference>
<dbReference type="GO" id="GO:0006189">
    <property type="term" value="P:'de novo' IMP biosynthetic process"/>
    <property type="evidence" value="ECO:0007669"/>
    <property type="project" value="UniProtKB-UniRule"/>
</dbReference>
<dbReference type="GO" id="GO:0009236">
    <property type="term" value="P:cobalamin biosynthetic process"/>
    <property type="evidence" value="ECO:0007669"/>
    <property type="project" value="InterPro"/>
</dbReference>
<dbReference type="CDD" id="cd01415">
    <property type="entry name" value="SAICAR_synt_PurC"/>
    <property type="match status" value="1"/>
</dbReference>
<dbReference type="FunFam" id="3.30.200.20:FF:000086">
    <property type="entry name" value="Phosphoribosylaminoimidazole-succinocarboxamide synthase"/>
    <property type="match status" value="1"/>
</dbReference>
<dbReference type="FunFam" id="3.30.470.20:FF:000006">
    <property type="entry name" value="Phosphoribosylaminoimidazole-succinocarboxamide synthase"/>
    <property type="match status" value="1"/>
</dbReference>
<dbReference type="Gene3D" id="3.30.470.20">
    <property type="entry name" value="ATP-grasp fold, B domain"/>
    <property type="match status" value="1"/>
</dbReference>
<dbReference type="Gene3D" id="3.30.200.20">
    <property type="entry name" value="Phosphorylase Kinase, domain 1"/>
    <property type="match status" value="1"/>
</dbReference>
<dbReference type="HAMAP" id="MF_00137">
    <property type="entry name" value="SAICAR_synth"/>
    <property type="match status" value="1"/>
</dbReference>
<dbReference type="InterPro" id="IPR028923">
    <property type="entry name" value="SAICAR_synt/ADE2_N"/>
</dbReference>
<dbReference type="InterPro" id="IPR033934">
    <property type="entry name" value="SAICAR_synt_PurC"/>
</dbReference>
<dbReference type="InterPro" id="IPR001636">
    <property type="entry name" value="SAICAR_synth"/>
</dbReference>
<dbReference type="InterPro" id="IPR050089">
    <property type="entry name" value="SAICAR_synthetase"/>
</dbReference>
<dbReference type="InterPro" id="IPR018236">
    <property type="entry name" value="SAICAR_synthetase_CS"/>
</dbReference>
<dbReference type="NCBIfam" id="TIGR00081">
    <property type="entry name" value="purC"/>
    <property type="match status" value="1"/>
</dbReference>
<dbReference type="PANTHER" id="PTHR43599">
    <property type="entry name" value="MULTIFUNCTIONAL PROTEIN ADE2"/>
    <property type="match status" value="1"/>
</dbReference>
<dbReference type="PANTHER" id="PTHR43599:SF3">
    <property type="entry name" value="SI:DKEY-6E2.2"/>
    <property type="match status" value="1"/>
</dbReference>
<dbReference type="Pfam" id="PF01259">
    <property type="entry name" value="SAICAR_synt"/>
    <property type="match status" value="1"/>
</dbReference>
<dbReference type="SUPFAM" id="SSF56104">
    <property type="entry name" value="SAICAR synthase-like"/>
    <property type="match status" value="1"/>
</dbReference>
<dbReference type="PROSITE" id="PS01057">
    <property type="entry name" value="SAICAR_SYNTHETASE_1"/>
    <property type="match status" value="1"/>
</dbReference>
<dbReference type="PROSITE" id="PS01058">
    <property type="entry name" value="SAICAR_SYNTHETASE_2"/>
    <property type="match status" value="1"/>
</dbReference>
<comment type="catalytic activity">
    <reaction evidence="1">
        <text>5-amino-1-(5-phospho-D-ribosyl)imidazole-4-carboxylate + L-aspartate + ATP = (2S)-2-[5-amino-1-(5-phospho-beta-D-ribosyl)imidazole-4-carboxamido]succinate + ADP + phosphate + 2 H(+)</text>
        <dbReference type="Rhea" id="RHEA:22628"/>
        <dbReference type="ChEBI" id="CHEBI:15378"/>
        <dbReference type="ChEBI" id="CHEBI:29991"/>
        <dbReference type="ChEBI" id="CHEBI:30616"/>
        <dbReference type="ChEBI" id="CHEBI:43474"/>
        <dbReference type="ChEBI" id="CHEBI:58443"/>
        <dbReference type="ChEBI" id="CHEBI:77657"/>
        <dbReference type="ChEBI" id="CHEBI:456216"/>
        <dbReference type="EC" id="6.3.2.6"/>
    </reaction>
</comment>
<comment type="pathway">
    <text evidence="1">Purine metabolism; IMP biosynthesis via de novo pathway; 5-amino-1-(5-phospho-D-ribosyl)imidazole-4-carboxamide from 5-amino-1-(5-phospho-D-ribosyl)imidazole-4-carboxylate: step 1/2.</text>
</comment>
<comment type="similarity">
    <text evidence="1">Belongs to the SAICAR synthetase family.</text>
</comment>
<name>PUR7_PSYCK</name>
<organism>
    <name type="scientific">Psychrobacter cryohalolentis (strain ATCC BAA-1226 / DSM 17306 / VKM B-2378 / K5)</name>
    <dbReference type="NCBI Taxonomy" id="335284"/>
    <lineage>
        <taxon>Bacteria</taxon>
        <taxon>Pseudomonadati</taxon>
        <taxon>Pseudomonadota</taxon>
        <taxon>Gammaproteobacteria</taxon>
        <taxon>Moraxellales</taxon>
        <taxon>Moraxellaceae</taxon>
        <taxon>Psychrobacter</taxon>
    </lineage>
</organism>
<protein>
    <recommendedName>
        <fullName evidence="1">Phosphoribosylaminoimidazole-succinocarboxamide synthase</fullName>
        <ecNumber evidence="1">6.3.2.6</ecNumber>
    </recommendedName>
    <alternativeName>
        <fullName evidence="1">SAICAR synthetase</fullName>
    </alternativeName>
</protein>
<accession>Q1QEF9</accession>
<evidence type="ECO:0000255" key="1">
    <source>
        <dbReference type="HAMAP-Rule" id="MF_00137"/>
    </source>
</evidence>
<proteinExistence type="inferred from homology"/>